<protein>
    <recommendedName>
        <fullName evidence="1">HTH-type transcriptional activator RhaR</fullName>
    </recommendedName>
    <alternativeName>
        <fullName evidence="1">L-rhamnose operon transcriptional activator RhaR</fullName>
    </alternativeName>
</protein>
<gene>
    <name evidence="1" type="primary">rhaR</name>
    <name type="ordered locus">ECP_4116</name>
</gene>
<reference key="1">
    <citation type="journal article" date="2006" name="Mol. Microbiol.">
        <title>Role of pathogenicity island-associated integrases in the genome plasticity of uropathogenic Escherichia coli strain 536.</title>
        <authorList>
            <person name="Hochhut B."/>
            <person name="Wilde C."/>
            <person name="Balling G."/>
            <person name="Middendorf B."/>
            <person name="Dobrindt U."/>
            <person name="Brzuszkiewicz E."/>
            <person name="Gottschalk G."/>
            <person name="Carniel E."/>
            <person name="Hacker J."/>
        </authorList>
    </citation>
    <scope>NUCLEOTIDE SEQUENCE [LARGE SCALE GENOMIC DNA]</scope>
    <source>
        <strain>536 / UPEC</strain>
    </source>
</reference>
<name>RHAR_ECOL5</name>
<organism>
    <name type="scientific">Escherichia coli O6:K15:H31 (strain 536 / UPEC)</name>
    <dbReference type="NCBI Taxonomy" id="362663"/>
    <lineage>
        <taxon>Bacteria</taxon>
        <taxon>Pseudomonadati</taxon>
        <taxon>Pseudomonadota</taxon>
        <taxon>Gammaproteobacteria</taxon>
        <taxon>Enterobacterales</taxon>
        <taxon>Enterobacteriaceae</taxon>
        <taxon>Escherichia</taxon>
    </lineage>
</organism>
<keyword id="KW-0010">Activator</keyword>
<keyword id="KW-0963">Cytoplasm</keyword>
<keyword id="KW-0238">DNA-binding</keyword>
<keyword id="KW-0677">Repeat</keyword>
<keyword id="KW-0684">Rhamnose metabolism</keyword>
<keyword id="KW-0804">Transcription</keyword>
<keyword id="KW-0805">Transcription regulation</keyword>
<dbReference type="EMBL" id="CP000247">
    <property type="protein sequence ID" value="ABG72072.1"/>
    <property type="status" value="ALT_INIT"/>
    <property type="molecule type" value="Genomic_DNA"/>
</dbReference>
<dbReference type="RefSeq" id="WP_001298410.1">
    <property type="nucleotide sequence ID" value="NC_008253.1"/>
</dbReference>
<dbReference type="SMR" id="Q0TAF7"/>
<dbReference type="GeneID" id="93778032"/>
<dbReference type="KEGG" id="ecp:ECP_4116"/>
<dbReference type="HOGENOM" id="CLU_000445_88_5_6"/>
<dbReference type="Proteomes" id="UP000009182">
    <property type="component" value="Chromosome"/>
</dbReference>
<dbReference type="GO" id="GO:0005737">
    <property type="term" value="C:cytoplasm"/>
    <property type="evidence" value="ECO:0007669"/>
    <property type="project" value="UniProtKB-SubCell"/>
</dbReference>
<dbReference type="GO" id="GO:0003700">
    <property type="term" value="F:DNA-binding transcription factor activity"/>
    <property type="evidence" value="ECO:0007669"/>
    <property type="project" value="UniProtKB-UniRule"/>
</dbReference>
<dbReference type="GO" id="GO:0043565">
    <property type="term" value="F:sequence-specific DNA binding"/>
    <property type="evidence" value="ECO:0007669"/>
    <property type="project" value="InterPro"/>
</dbReference>
<dbReference type="GO" id="GO:0045893">
    <property type="term" value="P:positive regulation of DNA-templated transcription"/>
    <property type="evidence" value="ECO:0007669"/>
    <property type="project" value="UniProtKB-UniRule"/>
</dbReference>
<dbReference type="GO" id="GO:0019299">
    <property type="term" value="P:rhamnose metabolic process"/>
    <property type="evidence" value="ECO:0007669"/>
    <property type="project" value="UniProtKB-UniRule"/>
</dbReference>
<dbReference type="CDD" id="cd06977">
    <property type="entry name" value="cupin_RhaR_RhaS-like_N"/>
    <property type="match status" value="1"/>
</dbReference>
<dbReference type="Gene3D" id="1.10.10.60">
    <property type="entry name" value="Homeodomain-like"/>
    <property type="match status" value="2"/>
</dbReference>
<dbReference type="Gene3D" id="2.60.120.10">
    <property type="entry name" value="Jelly Rolls"/>
    <property type="match status" value="1"/>
</dbReference>
<dbReference type="HAMAP" id="MF_01533">
    <property type="entry name" value="HTH_type_RhaR"/>
    <property type="match status" value="1"/>
</dbReference>
<dbReference type="InterPro" id="IPR003313">
    <property type="entry name" value="AraC-bd"/>
</dbReference>
<dbReference type="InterPro" id="IPR009057">
    <property type="entry name" value="Homeodomain-like_sf"/>
</dbReference>
<dbReference type="InterPro" id="IPR018060">
    <property type="entry name" value="HTH_AraC"/>
</dbReference>
<dbReference type="InterPro" id="IPR018062">
    <property type="entry name" value="HTH_AraC-typ_CS"/>
</dbReference>
<dbReference type="InterPro" id="IPR047220">
    <property type="entry name" value="RhaR_RhaS-like_N"/>
</dbReference>
<dbReference type="InterPro" id="IPR014710">
    <property type="entry name" value="RmlC-like_jellyroll"/>
</dbReference>
<dbReference type="InterPro" id="IPR011051">
    <property type="entry name" value="RmlC_Cupin_sf"/>
</dbReference>
<dbReference type="InterPro" id="IPR023699">
    <property type="entry name" value="Tscrpt_act_RhaR"/>
</dbReference>
<dbReference type="InterPro" id="IPR020449">
    <property type="entry name" value="Tscrpt_reg_AraC-type_HTH"/>
</dbReference>
<dbReference type="NCBIfam" id="NF010025">
    <property type="entry name" value="PRK13500.1"/>
    <property type="match status" value="1"/>
</dbReference>
<dbReference type="NCBIfam" id="NF010026">
    <property type="entry name" value="PRK13501.1"/>
    <property type="match status" value="1"/>
</dbReference>
<dbReference type="NCBIfam" id="NF010027">
    <property type="entry name" value="PRK13502.1"/>
    <property type="match status" value="1"/>
</dbReference>
<dbReference type="PANTHER" id="PTHR43280">
    <property type="entry name" value="ARAC-FAMILY TRANSCRIPTIONAL REGULATOR"/>
    <property type="match status" value="1"/>
</dbReference>
<dbReference type="PANTHER" id="PTHR43280:SF13">
    <property type="entry name" value="HTH-TYPE TRANSCRIPTIONAL ACTIVATOR RHAR"/>
    <property type="match status" value="1"/>
</dbReference>
<dbReference type="Pfam" id="PF02311">
    <property type="entry name" value="AraC_binding"/>
    <property type="match status" value="1"/>
</dbReference>
<dbReference type="Pfam" id="PF12833">
    <property type="entry name" value="HTH_18"/>
    <property type="match status" value="1"/>
</dbReference>
<dbReference type="PRINTS" id="PR00032">
    <property type="entry name" value="HTHARAC"/>
</dbReference>
<dbReference type="SMART" id="SM00342">
    <property type="entry name" value="HTH_ARAC"/>
    <property type="match status" value="1"/>
</dbReference>
<dbReference type="SUPFAM" id="SSF46689">
    <property type="entry name" value="Homeodomain-like"/>
    <property type="match status" value="2"/>
</dbReference>
<dbReference type="SUPFAM" id="SSF51182">
    <property type="entry name" value="RmlC-like cupins"/>
    <property type="match status" value="1"/>
</dbReference>
<dbReference type="PROSITE" id="PS00041">
    <property type="entry name" value="HTH_ARAC_FAMILY_1"/>
    <property type="match status" value="1"/>
</dbReference>
<dbReference type="PROSITE" id="PS01124">
    <property type="entry name" value="HTH_ARAC_FAMILY_2"/>
    <property type="match status" value="1"/>
</dbReference>
<sequence length="282" mass="32304">MAHQLKLLKDDFFASDQQAVAVADRYPQDVFAEHTHDFCELVIVWRGNGLHVLNDRPYRITRGDLFYIHADDKHSYASVNDLVLQNIIYCPERLKLNLDWQGAIPGFSASAGQPHWRLGSVGMAQARQVIGQLEHESSQHVSFANEMAELLFGQLVMLLNRHRYTSDSLPPTSSETLLDKLITRLAASLKSPFALDKFCDEASCSERVLRQQFRQQTGMTINQYLRQVRVCHAQYLLQHSRLLISDISTECGFEDSNYFSVVFTRETGMTPSQWRHLNSQKD</sequence>
<comment type="function">
    <text evidence="1">Activates expression of the rhaSR operon in response to L-rhamnose.</text>
</comment>
<comment type="subunit">
    <text evidence="1">Binds DNA as a dimer.</text>
</comment>
<comment type="subcellular location">
    <subcellularLocation>
        <location evidence="1">Cytoplasm</location>
    </subcellularLocation>
</comment>
<comment type="sequence caution" evidence="2">
    <conflict type="erroneous initiation">
        <sequence resource="EMBL-CDS" id="ABG72072"/>
    </conflict>
</comment>
<evidence type="ECO:0000255" key="1">
    <source>
        <dbReference type="HAMAP-Rule" id="MF_01533"/>
    </source>
</evidence>
<evidence type="ECO:0000305" key="2"/>
<accession>Q0TAF7</accession>
<proteinExistence type="inferred from homology"/>
<feature type="chain" id="PRO_0000292773" description="HTH-type transcriptional activator RhaR">
    <location>
        <begin position="1"/>
        <end position="282"/>
    </location>
</feature>
<feature type="domain" description="HTH araC/xylS-type" evidence="1">
    <location>
        <begin position="179"/>
        <end position="277"/>
    </location>
</feature>
<feature type="DNA-binding region" description="H-T-H motif" evidence="1">
    <location>
        <begin position="196"/>
        <end position="217"/>
    </location>
</feature>
<feature type="DNA-binding region" description="H-T-H motif" evidence="1">
    <location>
        <begin position="244"/>
        <end position="267"/>
    </location>
</feature>
<feature type="site" description="Interaction with sigma-70" evidence="1">
    <location>
        <position position="246"/>
    </location>
</feature>